<evidence type="ECO:0000255" key="1">
    <source>
        <dbReference type="HAMAP-Rule" id="MF_00380"/>
    </source>
</evidence>
<feature type="chain" id="PRO_1000080025" description="Integration host factor subunit alpha">
    <location>
        <begin position="1"/>
        <end position="107"/>
    </location>
</feature>
<protein>
    <recommendedName>
        <fullName evidence="1">Integration host factor subunit alpha</fullName>
        <shortName evidence="1">IHF-alpha</shortName>
    </recommendedName>
</protein>
<dbReference type="EMBL" id="CP000911">
    <property type="protein sequence ID" value="ABY37883.1"/>
    <property type="molecule type" value="Genomic_DNA"/>
</dbReference>
<dbReference type="RefSeq" id="WP_006072530.1">
    <property type="nucleotide sequence ID" value="NC_010169.1"/>
</dbReference>
<dbReference type="SMR" id="B0CLA3"/>
<dbReference type="KEGG" id="bmt:BSUIS_A0812"/>
<dbReference type="HOGENOM" id="CLU_105066_1_1_5"/>
<dbReference type="Proteomes" id="UP000008545">
    <property type="component" value="Chromosome I"/>
</dbReference>
<dbReference type="GO" id="GO:0005829">
    <property type="term" value="C:cytosol"/>
    <property type="evidence" value="ECO:0007669"/>
    <property type="project" value="TreeGrafter"/>
</dbReference>
<dbReference type="GO" id="GO:0003677">
    <property type="term" value="F:DNA binding"/>
    <property type="evidence" value="ECO:0007669"/>
    <property type="project" value="UniProtKB-UniRule"/>
</dbReference>
<dbReference type="GO" id="GO:0030527">
    <property type="term" value="F:structural constituent of chromatin"/>
    <property type="evidence" value="ECO:0007669"/>
    <property type="project" value="InterPro"/>
</dbReference>
<dbReference type="GO" id="GO:0006310">
    <property type="term" value="P:DNA recombination"/>
    <property type="evidence" value="ECO:0007669"/>
    <property type="project" value="UniProtKB-UniRule"/>
</dbReference>
<dbReference type="GO" id="GO:0009893">
    <property type="term" value="P:positive regulation of metabolic process"/>
    <property type="evidence" value="ECO:0007669"/>
    <property type="project" value="UniProtKB-ARBA"/>
</dbReference>
<dbReference type="GO" id="GO:0006355">
    <property type="term" value="P:regulation of DNA-templated transcription"/>
    <property type="evidence" value="ECO:0007669"/>
    <property type="project" value="UniProtKB-UniRule"/>
</dbReference>
<dbReference type="GO" id="GO:0006417">
    <property type="term" value="P:regulation of translation"/>
    <property type="evidence" value="ECO:0007669"/>
    <property type="project" value="UniProtKB-UniRule"/>
</dbReference>
<dbReference type="CDD" id="cd13835">
    <property type="entry name" value="IHF_A"/>
    <property type="match status" value="1"/>
</dbReference>
<dbReference type="Gene3D" id="4.10.520.10">
    <property type="entry name" value="IHF-like DNA-binding proteins"/>
    <property type="match status" value="1"/>
</dbReference>
<dbReference type="HAMAP" id="MF_00380">
    <property type="entry name" value="IHF_alpha"/>
    <property type="match status" value="1"/>
</dbReference>
<dbReference type="InterPro" id="IPR000119">
    <property type="entry name" value="Hist_DNA-bd"/>
</dbReference>
<dbReference type="InterPro" id="IPR020816">
    <property type="entry name" value="Histone-like_DNA-bd_CS"/>
</dbReference>
<dbReference type="InterPro" id="IPR010992">
    <property type="entry name" value="IHF-like_DNA-bd_dom_sf"/>
</dbReference>
<dbReference type="InterPro" id="IPR005684">
    <property type="entry name" value="IHF_alpha"/>
</dbReference>
<dbReference type="NCBIfam" id="TIGR00987">
    <property type="entry name" value="himA"/>
    <property type="match status" value="1"/>
</dbReference>
<dbReference type="NCBIfam" id="NF001401">
    <property type="entry name" value="PRK00285.1"/>
    <property type="match status" value="1"/>
</dbReference>
<dbReference type="PANTHER" id="PTHR33175">
    <property type="entry name" value="DNA-BINDING PROTEIN HU"/>
    <property type="match status" value="1"/>
</dbReference>
<dbReference type="PANTHER" id="PTHR33175:SF2">
    <property type="entry name" value="INTEGRATION HOST FACTOR SUBUNIT ALPHA"/>
    <property type="match status" value="1"/>
</dbReference>
<dbReference type="Pfam" id="PF00216">
    <property type="entry name" value="Bac_DNA_binding"/>
    <property type="match status" value="1"/>
</dbReference>
<dbReference type="PRINTS" id="PR01727">
    <property type="entry name" value="DNABINDINGHU"/>
</dbReference>
<dbReference type="SMART" id="SM00411">
    <property type="entry name" value="BHL"/>
    <property type="match status" value="1"/>
</dbReference>
<dbReference type="SUPFAM" id="SSF47729">
    <property type="entry name" value="IHF-like DNA-binding proteins"/>
    <property type="match status" value="1"/>
</dbReference>
<dbReference type="PROSITE" id="PS00045">
    <property type="entry name" value="HISTONE_LIKE"/>
    <property type="match status" value="1"/>
</dbReference>
<sequence length="107" mass="12000">MGGKTVTRADLVEAVYRKVGLSRTESAALVEMILDEVCDAIVNGETVKLSSFATFQVRDKNERIGRNPKTGEEVPILPRRVMTFKASNVLKQRILQEHQKRQGKTSK</sequence>
<organism>
    <name type="scientific">Brucella suis (strain ATCC 23445 / NCTC 10510)</name>
    <dbReference type="NCBI Taxonomy" id="470137"/>
    <lineage>
        <taxon>Bacteria</taxon>
        <taxon>Pseudomonadati</taxon>
        <taxon>Pseudomonadota</taxon>
        <taxon>Alphaproteobacteria</taxon>
        <taxon>Hyphomicrobiales</taxon>
        <taxon>Brucellaceae</taxon>
        <taxon>Brucella/Ochrobactrum group</taxon>
        <taxon>Brucella</taxon>
    </lineage>
</organism>
<proteinExistence type="inferred from homology"/>
<accession>B0CLA3</accession>
<reference key="1">
    <citation type="submission" date="2007-12" db="EMBL/GenBank/DDBJ databases">
        <title>Brucella suis ATCC 23445 whole genome shotgun sequencing project.</title>
        <authorList>
            <person name="Setubal J.C."/>
            <person name="Bowns C."/>
            <person name="Boyle S."/>
            <person name="Crasta O.R."/>
            <person name="Czar M.J."/>
            <person name="Dharmanolla C."/>
            <person name="Gillespie J.J."/>
            <person name="Kenyon R.W."/>
            <person name="Lu J."/>
            <person name="Mane S."/>
            <person name="Mohapatra S."/>
            <person name="Nagrani S."/>
            <person name="Purkayastha A."/>
            <person name="Rajasimha H.K."/>
            <person name="Shallom J.M."/>
            <person name="Shallom S."/>
            <person name="Shukla M."/>
            <person name="Snyder E.E."/>
            <person name="Sobral B.W."/>
            <person name="Wattam A.R."/>
            <person name="Will R."/>
            <person name="Williams K."/>
            <person name="Yoo H."/>
            <person name="Bruce D."/>
            <person name="Detter C."/>
            <person name="Munk C."/>
            <person name="Brettin T.S."/>
        </authorList>
    </citation>
    <scope>NUCLEOTIDE SEQUENCE [LARGE SCALE GENOMIC DNA]</scope>
    <source>
        <strain>ATCC 23445 / NCTC 10510</strain>
    </source>
</reference>
<keyword id="KW-0233">DNA recombination</keyword>
<keyword id="KW-0238">DNA-binding</keyword>
<keyword id="KW-0804">Transcription</keyword>
<keyword id="KW-0805">Transcription regulation</keyword>
<keyword id="KW-0810">Translation regulation</keyword>
<comment type="function">
    <text evidence="1">This protein is one of the two subunits of integration host factor, a specific DNA-binding protein that functions in genetic recombination as well as in transcriptional and translational control.</text>
</comment>
<comment type="subunit">
    <text evidence="1">Heterodimer of an alpha and a beta chain.</text>
</comment>
<comment type="similarity">
    <text evidence="1">Belongs to the bacterial histone-like protein family.</text>
</comment>
<gene>
    <name evidence="1" type="primary">ihfA</name>
    <name evidence="1" type="synonym">himA</name>
    <name type="ordered locus">BSUIS_A0812</name>
</gene>
<name>IHFA_BRUSI</name>